<keyword id="KW-0119">Carbohydrate metabolism</keyword>
<keyword id="KW-0378">Hydrolase</keyword>
<name>NAGB_STAES</name>
<accession>Q8CTR3</accession>
<proteinExistence type="inferred from homology"/>
<reference key="1">
    <citation type="journal article" date="2003" name="Mol. Microbiol.">
        <title>Genome-based analysis of virulence genes in a non-biofilm-forming Staphylococcus epidermidis strain (ATCC 12228).</title>
        <authorList>
            <person name="Zhang Y.-Q."/>
            <person name="Ren S.-X."/>
            <person name="Li H.-L."/>
            <person name="Wang Y.-X."/>
            <person name="Fu G."/>
            <person name="Yang J."/>
            <person name="Qin Z.-Q."/>
            <person name="Miao Y.-G."/>
            <person name="Wang W.-Y."/>
            <person name="Chen R.-S."/>
            <person name="Shen Y."/>
            <person name="Chen Z."/>
            <person name="Yuan Z.-H."/>
            <person name="Zhao G.-P."/>
            <person name="Qu D."/>
            <person name="Danchin A."/>
            <person name="Wen Y.-M."/>
        </authorList>
    </citation>
    <scope>NUCLEOTIDE SEQUENCE [LARGE SCALE GENOMIC DNA]</scope>
    <source>
        <strain>ATCC 12228 / FDA PCI 1200</strain>
    </source>
</reference>
<sequence>MKIINLDSKNLASFYVACELFKQIQQHPHAKLGLATGGTMTDVYHYLVNLLIKNKVDVSQVETFNLDEYVGLKASHQQSYHTYMNKVLFEQYPHFVKNHIHIPDGLSENLEAEAERYNNLLDERGPIDIQILGIGENGHIGFNEPGTDFNSETHVVNLTESTIKANSRFFDNEKDVPRQAVSMGVKSILKAKRIILLAFGPKKKEAISKLLNEQVTEDVPATILHTHPNVEVYVDDEAAPDCL</sequence>
<evidence type="ECO:0000255" key="1">
    <source>
        <dbReference type="HAMAP-Rule" id="MF_01241"/>
    </source>
</evidence>
<feature type="chain" id="PRO_0000160168" description="Glucosamine-6-phosphate deaminase">
    <location>
        <begin position="1"/>
        <end position="243"/>
    </location>
</feature>
<feature type="active site" description="Proton acceptor; for enolization step" evidence="1">
    <location>
        <position position="67"/>
    </location>
</feature>
<feature type="active site" description="For ring-opening step" evidence="1">
    <location>
        <position position="137"/>
    </location>
</feature>
<feature type="active site" description="Proton acceptor; for ring-opening step" evidence="1">
    <location>
        <position position="139"/>
    </location>
</feature>
<feature type="active site" description="For ring-opening step" evidence="1">
    <location>
        <position position="144"/>
    </location>
</feature>
<protein>
    <recommendedName>
        <fullName evidence="1">Glucosamine-6-phosphate deaminase</fullName>
        <ecNumber evidence="1">3.5.99.6</ecNumber>
    </recommendedName>
    <alternativeName>
        <fullName evidence="1">GlcN6P deaminase</fullName>
        <shortName evidence="1">GNPDA</shortName>
    </alternativeName>
    <alternativeName>
        <fullName evidence="1">Glucosamine-6-phosphate isomerase</fullName>
    </alternativeName>
</protein>
<comment type="function">
    <text evidence="1">Catalyzes the reversible isomerization-deamination of glucosamine 6-phosphate (GlcN6P) to form fructose 6-phosphate (Fru6P) and ammonium ion.</text>
</comment>
<comment type="catalytic activity">
    <reaction evidence="1">
        <text>alpha-D-glucosamine 6-phosphate + H2O = beta-D-fructose 6-phosphate + NH4(+)</text>
        <dbReference type="Rhea" id="RHEA:12172"/>
        <dbReference type="ChEBI" id="CHEBI:15377"/>
        <dbReference type="ChEBI" id="CHEBI:28938"/>
        <dbReference type="ChEBI" id="CHEBI:57634"/>
        <dbReference type="ChEBI" id="CHEBI:75989"/>
        <dbReference type="EC" id="3.5.99.6"/>
    </reaction>
</comment>
<comment type="pathway">
    <text evidence="1">Amino-sugar metabolism; N-acetylneuraminate degradation; D-fructose 6-phosphate from N-acetylneuraminate: step 5/5.</text>
</comment>
<comment type="similarity">
    <text evidence="1">Belongs to the glucosamine/galactosamine-6-phosphate isomerase family. NagB subfamily.</text>
</comment>
<dbReference type="EC" id="3.5.99.6" evidence="1"/>
<dbReference type="EMBL" id="AE015929">
    <property type="protein sequence ID" value="AAO03937.1"/>
    <property type="molecule type" value="Genomic_DNA"/>
</dbReference>
<dbReference type="RefSeq" id="NP_763895.1">
    <property type="nucleotide sequence ID" value="NC_004461.1"/>
</dbReference>
<dbReference type="RefSeq" id="WP_001832077.1">
    <property type="nucleotide sequence ID" value="NZ_WBME01000045.1"/>
</dbReference>
<dbReference type="SMR" id="Q8CTR3"/>
<dbReference type="GeneID" id="50019497"/>
<dbReference type="KEGG" id="sep:SE_0340"/>
<dbReference type="PATRIC" id="fig|176280.10.peg.313"/>
<dbReference type="eggNOG" id="COG0363">
    <property type="taxonomic scope" value="Bacteria"/>
</dbReference>
<dbReference type="HOGENOM" id="CLU_049611_1_1_9"/>
<dbReference type="OrthoDB" id="9791139at2"/>
<dbReference type="UniPathway" id="UPA00629">
    <property type="reaction ID" value="UER00684"/>
</dbReference>
<dbReference type="Proteomes" id="UP000001411">
    <property type="component" value="Chromosome"/>
</dbReference>
<dbReference type="GO" id="GO:0005737">
    <property type="term" value="C:cytoplasm"/>
    <property type="evidence" value="ECO:0007669"/>
    <property type="project" value="TreeGrafter"/>
</dbReference>
<dbReference type="GO" id="GO:0004342">
    <property type="term" value="F:glucosamine-6-phosphate deaminase activity"/>
    <property type="evidence" value="ECO:0007669"/>
    <property type="project" value="UniProtKB-UniRule"/>
</dbReference>
<dbReference type="GO" id="GO:0042802">
    <property type="term" value="F:identical protein binding"/>
    <property type="evidence" value="ECO:0007669"/>
    <property type="project" value="TreeGrafter"/>
</dbReference>
<dbReference type="GO" id="GO:0005975">
    <property type="term" value="P:carbohydrate metabolic process"/>
    <property type="evidence" value="ECO:0007669"/>
    <property type="project" value="InterPro"/>
</dbReference>
<dbReference type="GO" id="GO:0006043">
    <property type="term" value="P:glucosamine catabolic process"/>
    <property type="evidence" value="ECO:0007669"/>
    <property type="project" value="TreeGrafter"/>
</dbReference>
<dbReference type="GO" id="GO:0006046">
    <property type="term" value="P:N-acetylglucosamine catabolic process"/>
    <property type="evidence" value="ECO:0007669"/>
    <property type="project" value="TreeGrafter"/>
</dbReference>
<dbReference type="GO" id="GO:0019262">
    <property type="term" value="P:N-acetylneuraminate catabolic process"/>
    <property type="evidence" value="ECO:0007669"/>
    <property type="project" value="UniProtKB-UniRule"/>
</dbReference>
<dbReference type="CDD" id="cd01399">
    <property type="entry name" value="GlcN6P_deaminase"/>
    <property type="match status" value="1"/>
</dbReference>
<dbReference type="FunFam" id="3.40.50.1360:FF:000003">
    <property type="entry name" value="Glucosamine-6-phosphate deaminase"/>
    <property type="match status" value="1"/>
</dbReference>
<dbReference type="Gene3D" id="3.40.50.1360">
    <property type="match status" value="1"/>
</dbReference>
<dbReference type="HAMAP" id="MF_01241">
    <property type="entry name" value="GlcN6P_deamin"/>
    <property type="match status" value="1"/>
</dbReference>
<dbReference type="InterPro" id="IPR006148">
    <property type="entry name" value="Glc/Gal-6P_isomerase"/>
</dbReference>
<dbReference type="InterPro" id="IPR004547">
    <property type="entry name" value="Glucosamine6P_isomerase"/>
</dbReference>
<dbReference type="InterPro" id="IPR018321">
    <property type="entry name" value="Glucosamine6P_isomerase_CS"/>
</dbReference>
<dbReference type="InterPro" id="IPR037171">
    <property type="entry name" value="NagB/RpiA_transferase-like"/>
</dbReference>
<dbReference type="NCBIfam" id="TIGR00502">
    <property type="entry name" value="nagB"/>
    <property type="match status" value="1"/>
</dbReference>
<dbReference type="PANTHER" id="PTHR11280">
    <property type="entry name" value="GLUCOSAMINE-6-PHOSPHATE ISOMERASE"/>
    <property type="match status" value="1"/>
</dbReference>
<dbReference type="PANTHER" id="PTHR11280:SF5">
    <property type="entry name" value="GLUCOSAMINE-6-PHOSPHATE ISOMERASE"/>
    <property type="match status" value="1"/>
</dbReference>
<dbReference type="Pfam" id="PF01182">
    <property type="entry name" value="Glucosamine_iso"/>
    <property type="match status" value="1"/>
</dbReference>
<dbReference type="SUPFAM" id="SSF100950">
    <property type="entry name" value="NagB/RpiA/CoA transferase-like"/>
    <property type="match status" value="1"/>
</dbReference>
<dbReference type="PROSITE" id="PS01161">
    <property type="entry name" value="GLC_GALNAC_ISOMERASE"/>
    <property type="match status" value="1"/>
</dbReference>
<gene>
    <name evidence="1" type="primary">nagB</name>
    <name type="ordered locus">SE_0340</name>
</gene>
<organism>
    <name type="scientific">Staphylococcus epidermidis (strain ATCC 12228 / FDA PCI 1200)</name>
    <dbReference type="NCBI Taxonomy" id="176280"/>
    <lineage>
        <taxon>Bacteria</taxon>
        <taxon>Bacillati</taxon>
        <taxon>Bacillota</taxon>
        <taxon>Bacilli</taxon>
        <taxon>Bacillales</taxon>
        <taxon>Staphylococcaceae</taxon>
        <taxon>Staphylococcus</taxon>
    </lineage>
</organism>